<keyword id="KW-1185">Reference proteome</keyword>
<feature type="chain" id="PRO_1000201258" description="UPF0502 protein Swoo_2055">
    <location>
        <begin position="1"/>
        <end position="219"/>
    </location>
</feature>
<feature type="region of interest" description="Disordered" evidence="2">
    <location>
        <begin position="167"/>
        <end position="195"/>
    </location>
</feature>
<feature type="compositionally biased region" description="Basic and acidic residues" evidence="2">
    <location>
        <begin position="177"/>
        <end position="191"/>
    </location>
</feature>
<protein>
    <recommendedName>
        <fullName evidence="1">UPF0502 protein Swoo_2055</fullName>
    </recommendedName>
</protein>
<sequence>MNLSLHEARIIGCLLEKEVTTPDQYPLSLNSLTLACNQKSSRDPVMSMTESETQSAIDSLMKKRLVTDQTGFGSRVTKYKHRFCNTEFSDLQFSPAQFALICLLLLRGPQTPGELKSRSGRLHQFADLNEVENALLALAQREPSLVHQLPKEPGRRDSRFEELISDQVKGESVPISEHSRSQREAPSKRQDEMDELTLRVSQLELEVKTLKEALQDLLD</sequence>
<name>Y2055_SHEWM</name>
<accession>B1KRD2</accession>
<proteinExistence type="inferred from homology"/>
<gene>
    <name type="ordered locus">Swoo_2055</name>
</gene>
<dbReference type="EMBL" id="CP000961">
    <property type="protein sequence ID" value="ACA86339.1"/>
    <property type="molecule type" value="Genomic_DNA"/>
</dbReference>
<dbReference type="RefSeq" id="WP_012324684.1">
    <property type="nucleotide sequence ID" value="NC_010506.1"/>
</dbReference>
<dbReference type="SMR" id="B1KRD2"/>
<dbReference type="STRING" id="392500.Swoo_2055"/>
<dbReference type="KEGG" id="swd:Swoo_2055"/>
<dbReference type="eggNOG" id="COG3132">
    <property type="taxonomic scope" value="Bacteria"/>
</dbReference>
<dbReference type="HOGENOM" id="CLU_057831_2_0_6"/>
<dbReference type="Proteomes" id="UP000002168">
    <property type="component" value="Chromosome"/>
</dbReference>
<dbReference type="Gene3D" id="1.10.10.10">
    <property type="entry name" value="Winged helix-like DNA-binding domain superfamily/Winged helix DNA-binding domain"/>
    <property type="match status" value="2"/>
</dbReference>
<dbReference type="HAMAP" id="MF_01584">
    <property type="entry name" value="UPF0502"/>
    <property type="match status" value="1"/>
</dbReference>
<dbReference type="InterPro" id="IPR007432">
    <property type="entry name" value="DUF480"/>
</dbReference>
<dbReference type="InterPro" id="IPR036388">
    <property type="entry name" value="WH-like_DNA-bd_sf"/>
</dbReference>
<dbReference type="InterPro" id="IPR036390">
    <property type="entry name" value="WH_DNA-bd_sf"/>
</dbReference>
<dbReference type="PANTHER" id="PTHR38768">
    <property type="entry name" value="UPF0502 PROTEIN YCEH"/>
    <property type="match status" value="1"/>
</dbReference>
<dbReference type="PANTHER" id="PTHR38768:SF1">
    <property type="entry name" value="UPF0502 PROTEIN YCEH"/>
    <property type="match status" value="1"/>
</dbReference>
<dbReference type="Pfam" id="PF04337">
    <property type="entry name" value="DUF480"/>
    <property type="match status" value="1"/>
</dbReference>
<dbReference type="SUPFAM" id="SSF46785">
    <property type="entry name" value="Winged helix' DNA-binding domain"/>
    <property type="match status" value="2"/>
</dbReference>
<organism>
    <name type="scientific">Shewanella woodyi (strain ATCC 51908 / MS32)</name>
    <dbReference type="NCBI Taxonomy" id="392500"/>
    <lineage>
        <taxon>Bacteria</taxon>
        <taxon>Pseudomonadati</taxon>
        <taxon>Pseudomonadota</taxon>
        <taxon>Gammaproteobacteria</taxon>
        <taxon>Alteromonadales</taxon>
        <taxon>Shewanellaceae</taxon>
        <taxon>Shewanella</taxon>
    </lineage>
</organism>
<comment type="similarity">
    <text evidence="1">Belongs to the UPF0502 family.</text>
</comment>
<reference key="1">
    <citation type="submission" date="2008-02" db="EMBL/GenBank/DDBJ databases">
        <title>Complete sequence of Shewanella woodyi ATCC 51908.</title>
        <authorList>
            <consortium name="US DOE Joint Genome Institute"/>
            <person name="Copeland A."/>
            <person name="Lucas S."/>
            <person name="Lapidus A."/>
            <person name="Glavina del Rio T."/>
            <person name="Dalin E."/>
            <person name="Tice H."/>
            <person name="Bruce D."/>
            <person name="Goodwin L."/>
            <person name="Pitluck S."/>
            <person name="Sims D."/>
            <person name="Brettin T."/>
            <person name="Detter J.C."/>
            <person name="Han C."/>
            <person name="Kuske C.R."/>
            <person name="Schmutz J."/>
            <person name="Larimer F."/>
            <person name="Land M."/>
            <person name="Hauser L."/>
            <person name="Kyrpides N."/>
            <person name="Lykidis A."/>
            <person name="Zhao J.-S."/>
            <person name="Richardson P."/>
        </authorList>
    </citation>
    <scope>NUCLEOTIDE SEQUENCE [LARGE SCALE GENOMIC DNA]</scope>
    <source>
        <strain>ATCC 51908 / MS32</strain>
    </source>
</reference>
<evidence type="ECO:0000255" key="1">
    <source>
        <dbReference type="HAMAP-Rule" id="MF_01584"/>
    </source>
</evidence>
<evidence type="ECO:0000256" key="2">
    <source>
        <dbReference type="SAM" id="MobiDB-lite"/>
    </source>
</evidence>